<name>FLGH_VIBCM</name>
<feature type="signal peptide" evidence="1">
    <location>
        <begin position="1"/>
        <end position="18"/>
    </location>
</feature>
<feature type="chain" id="PRO_1000134834" description="Flagellar L-ring protein">
    <location>
        <begin position="19"/>
        <end position="261"/>
    </location>
</feature>
<feature type="region of interest" description="Disordered" evidence="2">
    <location>
        <begin position="37"/>
        <end position="67"/>
    </location>
</feature>
<feature type="lipid moiety-binding region" description="N-palmitoyl cysteine" evidence="1">
    <location>
        <position position="19"/>
    </location>
</feature>
<feature type="lipid moiety-binding region" description="S-diacylglycerol cysteine" evidence="1">
    <location>
        <position position="19"/>
    </location>
</feature>
<reference key="1">
    <citation type="journal article" date="2008" name="PLoS ONE">
        <title>A recalibrated molecular clock and independent origins for the cholera pandemic clones.</title>
        <authorList>
            <person name="Feng L."/>
            <person name="Reeves P.R."/>
            <person name="Lan R."/>
            <person name="Ren Y."/>
            <person name="Gao C."/>
            <person name="Zhou Z."/>
            <person name="Ren Y."/>
            <person name="Cheng J."/>
            <person name="Wang W."/>
            <person name="Wang J."/>
            <person name="Qian W."/>
            <person name="Li D."/>
            <person name="Wang L."/>
        </authorList>
    </citation>
    <scope>NUCLEOTIDE SEQUENCE [LARGE SCALE GENOMIC DNA]</scope>
    <source>
        <strain>M66-2</strain>
    </source>
</reference>
<keyword id="KW-0975">Bacterial flagellum</keyword>
<keyword id="KW-0998">Cell outer membrane</keyword>
<keyword id="KW-0449">Lipoprotein</keyword>
<keyword id="KW-0472">Membrane</keyword>
<keyword id="KW-0564">Palmitate</keyword>
<keyword id="KW-0732">Signal</keyword>
<dbReference type="EMBL" id="CP001233">
    <property type="protein sequence ID" value="ACP06418.1"/>
    <property type="molecule type" value="Genomic_DNA"/>
</dbReference>
<dbReference type="SMR" id="C3LPJ8"/>
<dbReference type="KEGG" id="vcm:VCM66_2117"/>
<dbReference type="HOGENOM" id="CLU_069313_0_2_6"/>
<dbReference type="Proteomes" id="UP000001217">
    <property type="component" value="Chromosome I"/>
</dbReference>
<dbReference type="GO" id="GO:0009427">
    <property type="term" value="C:bacterial-type flagellum basal body, distal rod, L ring"/>
    <property type="evidence" value="ECO:0007669"/>
    <property type="project" value="InterPro"/>
</dbReference>
<dbReference type="GO" id="GO:0009279">
    <property type="term" value="C:cell outer membrane"/>
    <property type="evidence" value="ECO:0007669"/>
    <property type="project" value="UniProtKB-SubCell"/>
</dbReference>
<dbReference type="GO" id="GO:0003774">
    <property type="term" value="F:cytoskeletal motor activity"/>
    <property type="evidence" value="ECO:0007669"/>
    <property type="project" value="InterPro"/>
</dbReference>
<dbReference type="GO" id="GO:0071973">
    <property type="term" value="P:bacterial-type flagellum-dependent cell motility"/>
    <property type="evidence" value="ECO:0007669"/>
    <property type="project" value="InterPro"/>
</dbReference>
<dbReference type="HAMAP" id="MF_00415">
    <property type="entry name" value="FlgH"/>
    <property type="match status" value="1"/>
</dbReference>
<dbReference type="InterPro" id="IPR000527">
    <property type="entry name" value="Flag_Lring"/>
</dbReference>
<dbReference type="NCBIfam" id="NF001302">
    <property type="entry name" value="PRK00249.1-2"/>
    <property type="match status" value="1"/>
</dbReference>
<dbReference type="PANTHER" id="PTHR34933">
    <property type="entry name" value="FLAGELLAR L-RING PROTEIN"/>
    <property type="match status" value="1"/>
</dbReference>
<dbReference type="PANTHER" id="PTHR34933:SF1">
    <property type="entry name" value="FLAGELLAR L-RING PROTEIN"/>
    <property type="match status" value="1"/>
</dbReference>
<dbReference type="Pfam" id="PF02107">
    <property type="entry name" value="FlgH"/>
    <property type="match status" value="1"/>
</dbReference>
<dbReference type="PRINTS" id="PR01008">
    <property type="entry name" value="FLGLRINGFLGH"/>
</dbReference>
<dbReference type="PROSITE" id="PS51257">
    <property type="entry name" value="PROKAR_LIPOPROTEIN"/>
    <property type="match status" value="1"/>
</dbReference>
<sequence>MAAMKRLLASSLLILLSGCSLMQPPIESAETIQGTTTVDAVEGDKSESNSGLTDALRNRTDPVAGDPAWAPIHPKGKPEHYAAETGSLFNLASSSSMYDDSKPRGVGDIITVTLNESTKAAKSADADLNKKNDASMDPLAVGGKDLTIGDYNFSYALKNDNKFSGSAAANQSNSMSGSITVEVIEVLANGNLVIRGEKWLTLNTGDEYIRLSGTIRPDDIDFDNTIASNRISNARIQYSGTGTNQDMQEPGFLARFFNVSL</sequence>
<organism>
    <name type="scientific">Vibrio cholerae serotype O1 (strain M66-2)</name>
    <dbReference type="NCBI Taxonomy" id="579112"/>
    <lineage>
        <taxon>Bacteria</taxon>
        <taxon>Pseudomonadati</taxon>
        <taxon>Pseudomonadota</taxon>
        <taxon>Gammaproteobacteria</taxon>
        <taxon>Vibrionales</taxon>
        <taxon>Vibrionaceae</taxon>
        <taxon>Vibrio</taxon>
    </lineage>
</organism>
<proteinExistence type="inferred from homology"/>
<protein>
    <recommendedName>
        <fullName evidence="1">Flagellar L-ring protein</fullName>
    </recommendedName>
    <alternativeName>
        <fullName evidence="1">Basal body L-ring protein</fullName>
    </alternativeName>
</protein>
<gene>
    <name evidence="1" type="primary">flgH</name>
    <name type="ordered locus">VCM66_2117</name>
</gene>
<accession>C3LPJ8</accession>
<evidence type="ECO:0000255" key="1">
    <source>
        <dbReference type="HAMAP-Rule" id="MF_00415"/>
    </source>
</evidence>
<evidence type="ECO:0000256" key="2">
    <source>
        <dbReference type="SAM" id="MobiDB-lite"/>
    </source>
</evidence>
<comment type="function">
    <text evidence="1">Assembles around the rod to form the L-ring and probably protects the motor/basal body from shearing forces during rotation.</text>
</comment>
<comment type="subunit">
    <text evidence="1">The basal body constitutes a major portion of the flagellar organelle and consists of four rings (L,P,S, and M) mounted on a central rod.</text>
</comment>
<comment type="subcellular location">
    <subcellularLocation>
        <location evidence="1">Cell outer membrane</location>
        <topology evidence="1">Lipid-anchor</topology>
    </subcellularLocation>
    <subcellularLocation>
        <location evidence="1">Bacterial flagellum basal body</location>
    </subcellularLocation>
</comment>
<comment type="similarity">
    <text evidence="1">Belongs to the FlgH family.</text>
</comment>